<reference key="1">
    <citation type="journal article" date="2001" name="Nature">
        <title>Genome sequence and gene compaction of the eukaryote parasite Encephalitozoon cuniculi.</title>
        <authorList>
            <person name="Katinka M.D."/>
            <person name="Duprat S."/>
            <person name="Cornillot E."/>
            <person name="Metenier G."/>
            <person name="Thomarat F."/>
            <person name="Prensier G."/>
            <person name="Barbe V."/>
            <person name="Peyretaillade E."/>
            <person name="Brottier P."/>
            <person name="Wincker P."/>
            <person name="Delbac F."/>
            <person name="El Alaoui H."/>
            <person name="Peyret P."/>
            <person name="Saurin W."/>
            <person name="Gouy M."/>
            <person name="Weissenbach J."/>
            <person name="Vivares C.P."/>
        </authorList>
    </citation>
    <scope>NUCLEOTIDE SEQUENCE [LARGE SCALE GENOMIC DNA]</scope>
    <source>
        <strain>GB-M1</strain>
    </source>
</reference>
<reference key="2">
    <citation type="journal article" date="2004" name="Biochemistry">
        <title>An Encephalitozoon cuniculi ortholog of the RNA polymerase II carboxyl-terminal domain (CTD) serine phosphatase Fcp1.</title>
        <authorList>
            <person name="Hausmann S."/>
            <person name="Schwer B."/>
            <person name="Shuman S."/>
        </authorList>
    </citation>
    <scope>FUNCTION</scope>
    <scope>SUBUNIT</scope>
</reference>
<dbReference type="EC" id="3.1.3.16"/>
<dbReference type="EMBL" id="AL590447">
    <property type="protein sequence ID" value="CAD25621.1"/>
    <property type="molecule type" value="Genomic_DNA"/>
</dbReference>
<dbReference type="RefSeq" id="NP_586017.1">
    <property type="nucleotide sequence ID" value="NM_001041639.1"/>
</dbReference>
<dbReference type="SMR" id="Q8SV03"/>
<dbReference type="STRING" id="284813.Q8SV03"/>
<dbReference type="GeneID" id="859447"/>
<dbReference type="KEGG" id="ecu:ECU07_0890"/>
<dbReference type="VEuPathDB" id="MicrosporidiaDB:ECU07_0890"/>
<dbReference type="HOGENOM" id="CLU_007683_2_0_1"/>
<dbReference type="InParanoid" id="Q8SV03"/>
<dbReference type="OrthoDB" id="10249888at2759"/>
<dbReference type="Proteomes" id="UP000000819">
    <property type="component" value="Chromosome VII"/>
</dbReference>
<dbReference type="GO" id="GO:0005634">
    <property type="term" value="C:nucleus"/>
    <property type="evidence" value="ECO:0007669"/>
    <property type="project" value="UniProtKB-SubCell"/>
</dbReference>
<dbReference type="GO" id="GO:0046872">
    <property type="term" value="F:metal ion binding"/>
    <property type="evidence" value="ECO:0007669"/>
    <property type="project" value="UniProtKB-KW"/>
</dbReference>
<dbReference type="GO" id="GO:0008420">
    <property type="term" value="F:RNA polymerase II CTD heptapeptide repeat phosphatase activity"/>
    <property type="evidence" value="ECO:0007669"/>
    <property type="project" value="InterPro"/>
</dbReference>
<dbReference type="CDD" id="cd07521">
    <property type="entry name" value="HAD_FCP1-like"/>
    <property type="match status" value="1"/>
</dbReference>
<dbReference type="Gene3D" id="3.40.50.10190">
    <property type="entry name" value="BRCT domain"/>
    <property type="match status" value="1"/>
</dbReference>
<dbReference type="Gene3D" id="3.40.50.1000">
    <property type="entry name" value="HAD superfamily/HAD-like"/>
    <property type="match status" value="1"/>
</dbReference>
<dbReference type="InterPro" id="IPR001357">
    <property type="entry name" value="BRCT_dom"/>
</dbReference>
<dbReference type="InterPro" id="IPR036420">
    <property type="entry name" value="BRCT_dom_sf"/>
</dbReference>
<dbReference type="InterPro" id="IPR039189">
    <property type="entry name" value="Fcp1"/>
</dbReference>
<dbReference type="InterPro" id="IPR004274">
    <property type="entry name" value="FCP1_dom"/>
</dbReference>
<dbReference type="InterPro" id="IPR011947">
    <property type="entry name" value="FCP1_euk"/>
</dbReference>
<dbReference type="InterPro" id="IPR036412">
    <property type="entry name" value="HAD-like_sf"/>
</dbReference>
<dbReference type="InterPro" id="IPR023214">
    <property type="entry name" value="HAD_sf"/>
</dbReference>
<dbReference type="NCBIfam" id="TIGR02250">
    <property type="entry name" value="FCP1_euk"/>
    <property type="match status" value="1"/>
</dbReference>
<dbReference type="PANTHER" id="PTHR23081">
    <property type="entry name" value="RNA POLYMERASE II CTD PHOSPHATASE"/>
    <property type="match status" value="1"/>
</dbReference>
<dbReference type="PANTHER" id="PTHR23081:SF36">
    <property type="entry name" value="RNA POLYMERASE II SUBUNIT A C-TERMINAL DOMAIN PHOSPHATASE"/>
    <property type="match status" value="1"/>
</dbReference>
<dbReference type="Pfam" id="PF03031">
    <property type="entry name" value="NIF"/>
    <property type="match status" value="1"/>
</dbReference>
<dbReference type="SMART" id="SM00577">
    <property type="entry name" value="CPDc"/>
    <property type="match status" value="1"/>
</dbReference>
<dbReference type="SUPFAM" id="SSF52113">
    <property type="entry name" value="BRCT domain"/>
    <property type="match status" value="1"/>
</dbReference>
<dbReference type="SUPFAM" id="SSF56784">
    <property type="entry name" value="HAD-like"/>
    <property type="match status" value="1"/>
</dbReference>
<dbReference type="PROSITE" id="PS50172">
    <property type="entry name" value="BRCT"/>
    <property type="match status" value="1"/>
</dbReference>
<dbReference type="PROSITE" id="PS50969">
    <property type="entry name" value="FCP1"/>
    <property type="match status" value="1"/>
</dbReference>
<sequence>MGGCNHPIRLGTLCGVCGMEIQEESHLFCALYNTDNVKITHEEAVAIHKEKMEALEMQMKLILVLDLDQTVLHTTYGTSSLEGTVKFVIDRCRYCVKLRPNLDYMLRRISKLYEIHVYTMGTRAYAERIVEIIDPSGKYFDDRIITRDENQGVLVKRLSRLFPHDHRNIVILDDRPDVWDYCENLVLIRPFWYFNRVDINDPLRLKRKIEKEAGENKALEEFVSKRKKIEDIRNPEIASRLDDMVLESSCGSEGVEDDSRSTEEKEVSEVQSVASGDSELLKVAGFLRKVHRKYFASKQRNVKRILRKIRRRVFGGDRFFVAEIANRAWLVKTIEMYGGIVGIPESGVDFVVSSCEREAEYLAQKFECLAVSPKWIADCVYSLKRVEYGKYVVCDHRTKDEYEEELERLFT</sequence>
<accession>Q8SV03</accession>
<comment type="function">
    <text evidence="4">Processively dephosphorylates 'Ser-2' and 'Ser-5' of the heptad repeats YSPTSPS in the C-terminal domain of the largest RNA polymerase II subunit (RPB1). This promotes the activity of RNA polymerase II.</text>
</comment>
<comment type="catalytic activity">
    <reaction>
        <text>O-phospho-L-seryl-[protein] + H2O = L-seryl-[protein] + phosphate</text>
        <dbReference type="Rhea" id="RHEA:20629"/>
        <dbReference type="Rhea" id="RHEA-COMP:9863"/>
        <dbReference type="Rhea" id="RHEA-COMP:11604"/>
        <dbReference type="ChEBI" id="CHEBI:15377"/>
        <dbReference type="ChEBI" id="CHEBI:29999"/>
        <dbReference type="ChEBI" id="CHEBI:43474"/>
        <dbReference type="ChEBI" id="CHEBI:83421"/>
        <dbReference type="EC" id="3.1.3.16"/>
    </reaction>
</comment>
<comment type="catalytic activity">
    <reaction>
        <text>O-phospho-L-threonyl-[protein] + H2O = L-threonyl-[protein] + phosphate</text>
        <dbReference type="Rhea" id="RHEA:47004"/>
        <dbReference type="Rhea" id="RHEA-COMP:11060"/>
        <dbReference type="Rhea" id="RHEA-COMP:11605"/>
        <dbReference type="ChEBI" id="CHEBI:15377"/>
        <dbReference type="ChEBI" id="CHEBI:30013"/>
        <dbReference type="ChEBI" id="CHEBI:43474"/>
        <dbReference type="ChEBI" id="CHEBI:61977"/>
        <dbReference type="EC" id="3.1.3.16"/>
    </reaction>
</comment>
<comment type="cofactor">
    <cofactor evidence="1">
        <name>Mg(2+)</name>
        <dbReference type="ChEBI" id="CHEBI:18420"/>
    </cofactor>
    <cofactor evidence="1">
        <name>Mn(2+)</name>
        <dbReference type="ChEBI" id="CHEBI:29035"/>
    </cofactor>
    <cofactor evidence="1">
        <name>Co(2+)</name>
        <dbReference type="ChEBI" id="CHEBI:48828"/>
    </cofactor>
</comment>
<comment type="subunit">
    <text evidence="4">Monomer.</text>
</comment>
<comment type="subcellular location">
    <subcellularLocation>
        <location evidence="5">Nucleus</location>
    </subcellularLocation>
</comment>
<proteinExistence type="evidence at protein level"/>
<feature type="chain" id="PRO_0000212566" description="RNA polymerase II subunit A C-terminal domain phosphatase">
    <location>
        <begin position="1"/>
        <end position="411"/>
    </location>
</feature>
<feature type="domain" description="FCP1 homology" evidence="3">
    <location>
        <begin position="56"/>
        <end position="212"/>
    </location>
</feature>
<feature type="domain" description="BRCT" evidence="2">
    <location>
        <begin position="309"/>
        <end position="393"/>
    </location>
</feature>
<feature type="active site" evidence="1">
    <location>
        <position position="66"/>
    </location>
</feature>
<feature type="active site" evidence="1">
    <location>
        <position position="68"/>
    </location>
</feature>
<name>FCP1_ENCCU</name>
<gene>
    <name type="primary">FCP1</name>
    <name type="ordered locus">ECU07_0890</name>
</gene>
<evidence type="ECO:0000250" key="1"/>
<evidence type="ECO:0000255" key="2">
    <source>
        <dbReference type="PROSITE-ProRule" id="PRU00033"/>
    </source>
</evidence>
<evidence type="ECO:0000255" key="3">
    <source>
        <dbReference type="PROSITE-ProRule" id="PRU00336"/>
    </source>
</evidence>
<evidence type="ECO:0000269" key="4">
    <source>
    </source>
</evidence>
<evidence type="ECO:0000305" key="5"/>
<organism>
    <name type="scientific">Encephalitozoon cuniculi (strain GB-M1)</name>
    <name type="common">Microsporidian parasite</name>
    <dbReference type="NCBI Taxonomy" id="284813"/>
    <lineage>
        <taxon>Eukaryota</taxon>
        <taxon>Fungi</taxon>
        <taxon>Fungi incertae sedis</taxon>
        <taxon>Microsporidia</taxon>
        <taxon>Unikaryonidae</taxon>
        <taxon>Encephalitozoon</taxon>
    </lineage>
</organism>
<protein>
    <recommendedName>
        <fullName>RNA polymerase II subunit A C-terminal domain phosphatase</fullName>
        <ecNumber>3.1.3.16</ecNumber>
    </recommendedName>
    <alternativeName>
        <fullName>CTD phosphatase FCP1</fullName>
    </alternativeName>
</protein>
<keyword id="KW-0170">Cobalt</keyword>
<keyword id="KW-0378">Hydrolase</keyword>
<keyword id="KW-0460">Magnesium</keyword>
<keyword id="KW-0464">Manganese</keyword>
<keyword id="KW-0479">Metal-binding</keyword>
<keyword id="KW-0539">Nucleus</keyword>
<keyword id="KW-0904">Protein phosphatase</keyword>
<keyword id="KW-1185">Reference proteome</keyword>